<name>GLYA_STRAW</name>
<dbReference type="EC" id="2.1.2.1" evidence="1"/>
<dbReference type="EMBL" id="BA000030">
    <property type="protein sequence ID" value="BAC70486.1"/>
    <property type="molecule type" value="Genomic_DNA"/>
</dbReference>
<dbReference type="RefSeq" id="WP_010984207.1">
    <property type="nucleotide sequence ID" value="NZ_JZJK01000071.1"/>
</dbReference>
<dbReference type="SMR" id="Q82JI0"/>
<dbReference type="GeneID" id="41539862"/>
<dbReference type="KEGG" id="sma:SAVERM_2775"/>
<dbReference type="eggNOG" id="COG0112">
    <property type="taxonomic scope" value="Bacteria"/>
</dbReference>
<dbReference type="HOGENOM" id="CLU_022477_2_1_11"/>
<dbReference type="OrthoDB" id="9803846at2"/>
<dbReference type="UniPathway" id="UPA00193"/>
<dbReference type="UniPathway" id="UPA00288">
    <property type="reaction ID" value="UER01023"/>
</dbReference>
<dbReference type="Proteomes" id="UP000000428">
    <property type="component" value="Chromosome"/>
</dbReference>
<dbReference type="GO" id="GO:0005829">
    <property type="term" value="C:cytosol"/>
    <property type="evidence" value="ECO:0007669"/>
    <property type="project" value="TreeGrafter"/>
</dbReference>
<dbReference type="GO" id="GO:0004372">
    <property type="term" value="F:glycine hydroxymethyltransferase activity"/>
    <property type="evidence" value="ECO:0007669"/>
    <property type="project" value="UniProtKB-UniRule"/>
</dbReference>
<dbReference type="GO" id="GO:0030170">
    <property type="term" value="F:pyridoxal phosphate binding"/>
    <property type="evidence" value="ECO:0007669"/>
    <property type="project" value="UniProtKB-UniRule"/>
</dbReference>
<dbReference type="GO" id="GO:0019264">
    <property type="term" value="P:glycine biosynthetic process from serine"/>
    <property type="evidence" value="ECO:0007669"/>
    <property type="project" value="UniProtKB-UniRule"/>
</dbReference>
<dbReference type="GO" id="GO:0035999">
    <property type="term" value="P:tetrahydrofolate interconversion"/>
    <property type="evidence" value="ECO:0007669"/>
    <property type="project" value="UniProtKB-UniRule"/>
</dbReference>
<dbReference type="CDD" id="cd00378">
    <property type="entry name" value="SHMT"/>
    <property type="match status" value="1"/>
</dbReference>
<dbReference type="FunFam" id="3.40.640.10:FF:000001">
    <property type="entry name" value="Serine hydroxymethyltransferase"/>
    <property type="match status" value="1"/>
</dbReference>
<dbReference type="Gene3D" id="3.90.1150.10">
    <property type="entry name" value="Aspartate Aminotransferase, domain 1"/>
    <property type="match status" value="1"/>
</dbReference>
<dbReference type="Gene3D" id="3.40.640.10">
    <property type="entry name" value="Type I PLP-dependent aspartate aminotransferase-like (Major domain)"/>
    <property type="match status" value="1"/>
</dbReference>
<dbReference type="HAMAP" id="MF_00051">
    <property type="entry name" value="SHMT"/>
    <property type="match status" value="1"/>
</dbReference>
<dbReference type="InterPro" id="IPR015424">
    <property type="entry name" value="PyrdxlP-dep_Trfase"/>
</dbReference>
<dbReference type="InterPro" id="IPR015421">
    <property type="entry name" value="PyrdxlP-dep_Trfase_major"/>
</dbReference>
<dbReference type="InterPro" id="IPR015422">
    <property type="entry name" value="PyrdxlP-dep_Trfase_small"/>
</dbReference>
<dbReference type="InterPro" id="IPR001085">
    <property type="entry name" value="Ser_HO-MeTrfase"/>
</dbReference>
<dbReference type="InterPro" id="IPR049943">
    <property type="entry name" value="Ser_HO-MeTrfase-like"/>
</dbReference>
<dbReference type="InterPro" id="IPR019798">
    <property type="entry name" value="Ser_HO-MeTrfase_PLP_BS"/>
</dbReference>
<dbReference type="InterPro" id="IPR039429">
    <property type="entry name" value="SHMT-like_dom"/>
</dbReference>
<dbReference type="NCBIfam" id="NF000586">
    <property type="entry name" value="PRK00011.1"/>
    <property type="match status" value="1"/>
</dbReference>
<dbReference type="PANTHER" id="PTHR11680">
    <property type="entry name" value="SERINE HYDROXYMETHYLTRANSFERASE"/>
    <property type="match status" value="1"/>
</dbReference>
<dbReference type="PANTHER" id="PTHR11680:SF35">
    <property type="entry name" value="SERINE HYDROXYMETHYLTRANSFERASE 1"/>
    <property type="match status" value="1"/>
</dbReference>
<dbReference type="Pfam" id="PF00464">
    <property type="entry name" value="SHMT"/>
    <property type="match status" value="1"/>
</dbReference>
<dbReference type="PIRSF" id="PIRSF000412">
    <property type="entry name" value="SHMT"/>
    <property type="match status" value="1"/>
</dbReference>
<dbReference type="SUPFAM" id="SSF53383">
    <property type="entry name" value="PLP-dependent transferases"/>
    <property type="match status" value="1"/>
</dbReference>
<dbReference type="PROSITE" id="PS00096">
    <property type="entry name" value="SHMT"/>
    <property type="match status" value="1"/>
</dbReference>
<protein>
    <recommendedName>
        <fullName evidence="1">Serine hydroxymethyltransferase</fullName>
        <shortName evidence="1">SHMT</shortName>
        <shortName evidence="1">Serine methylase</shortName>
        <ecNumber evidence="1">2.1.2.1</ecNumber>
    </recommendedName>
</protein>
<feature type="chain" id="PRO_0000113671" description="Serine hydroxymethyltransferase">
    <location>
        <begin position="1"/>
        <end position="420"/>
    </location>
</feature>
<feature type="binding site" evidence="1">
    <location>
        <position position="121"/>
    </location>
    <ligand>
        <name>(6S)-5,6,7,8-tetrahydrofolate</name>
        <dbReference type="ChEBI" id="CHEBI:57453"/>
    </ligand>
</feature>
<feature type="binding site" evidence="1">
    <location>
        <begin position="125"/>
        <end position="127"/>
    </location>
    <ligand>
        <name>(6S)-5,6,7,8-tetrahydrofolate</name>
        <dbReference type="ChEBI" id="CHEBI:57453"/>
    </ligand>
</feature>
<feature type="site" description="Plays an important role in substrate specificity" evidence="1">
    <location>
        <position position="229"/>
    </location>
</feature>
<feature type="modified residue" description="N6-(pyridoxal phosphate)lysine" evidence="1">
    <location>
        <position position="230"/>
    </location>
</feature>
<gene>
    <name evidence="1" type="primary">glyA</name>
    <name type="synonym">glyA1</name>
    <name type="ordered locus">SAV_2775</name>
</gene>
<keyword id="KW-0028">Amino-acid biosynthesis</keyword>
<keyword id="KW-0963">Cytoplasm</keyword>
<keyword id="KW-0554">One-carbon metabolism</keyword>
<keyword id="KW-0663">Pyridoxal phosphate</keyword>
<keyword id="KW-1185">Reference proteome</keyword>
<keyword id="KW-0808">Transferase</keyword>
<reference key="1">
    <citation type="journal article" date="2001" name="Proc. Natl. Acad. Sci. U.S.A.">
        <title>Genome sequence of an industrial microorganism Streptomyces avermitilis: deducing the ability of producing secondary metabolites.</title>
        <authorList>
            <person name="Omura S."/>
            <person name="Ikeda H."/>
            <person name="Ishikawa J."/>
            <person name="Hanamoto A."/>
            <person name="Takahashi C."/>
            <person name="Shinose M."/>
            <person name="Takahashi Y."/>
            <person name="Horikawa H."/>
            <person name="Nakazawa H."/>
            <person name="Osonoe T."/>
            <person name="Kikuchi H."/>
            <person name="Shiba T."/>
            <person name="Sakaki Y."/>
            <person name="Hattori M."/>
        </authorList>
    </citation>
    <scope>NUCLEOTIDE SEQUENCE [LARGE SCALE GENOMIC DNA]</scope>
    <source>
        <strain>ATCC 31267 / DSM 46492 / JCM 5070 / NBRC 14893 / NCIMB 12804 / NRRL 8165 / MA-4680</strain>
    </source>
</reference>
<reference key="2">
    <citation type="journal article" date="2003" name="Nat. Biotechnol.">
        <title>Complete genome sequence and comparative analysis of the industrial microorganism Streptomyces avermitilis.</title>
        <authorList>
            <person name="Ikeda H."/>
            <person name="Ishikawa J."/>
            <person name="Hanamoto A."/>
            <person name="Shinose M."/>
            <person name="Kikuchi H."/>
            <person name="Shiba T."/>
            <person name="Sakaki Y."/>
            <person name="Hattori M."/>
            <person name="Omura S."/>
        </authorList>
    </citation>
    <scope>NUCLEOTIDE SEQUENCE [LARGE SCALE GENOMIC DNA]</scope>
    <source>
        <strain>ATCC 31267 / DSM 46492 / JCM 5070 / NBRC 14893 / NCIMB 12804 / NRRL 8165 / MA-4680</strain>
    </source>
</reference>
<proteinExistence type="inferred from homology"/>
<sequence>MSLLNTPLHELDPDVAAAVDAELNRQQSTLEMIASENFAPVAVMEAQGSVLTNKYAEGYPGRRYYGGCEHVDVVEQIAIDRVKELFGAEHANVQPHSGAQANAAAMFALLKPGDTIMGLNLAHGGHLTHGMKINFSGKLYNVVAYHVDETTGQVDMAEVEKLAKESRPKLIVAGWSAYPRQLDFAAFRRIADEVGAYLMVDMAHFAGLVAAGLHPNPVPHAHVVTTTTHKTLGGPRGGVILSTAELAKKINSAVFPGQQGGPLEHVIAAKAVSFKVAASDDFKERQQRTLDGARILAERLVRDDVKAVGVDVLSGGTDVHLVLVDLRDSELDGQQAEDRLHEVGITVNRNAIPNDPRPPMVTSGLRIGTPALATRGFQAADFTEVADIIAEALKPSYDADALKARVTALADKHPLYPGLK</sequence>
<comment type="function">
    <text evidence="1">Catalyzes the reversible interconversion of serine and glycine with tetrahydrofolate (THF) serving as the one-carbon carrier. This reaction serves as the major source of one-carbon groups required for the biosynthesis of purines, thymidylate, methionine, and other important biomolecules. Also exhibits THF-independent aldolase activity toward beta-hydroxyamino acids, producing glycine and aldehydes, via a retro-aldol mechanism.</text>
</comment>
<comment type="catalytic activity">
    <reaction evidence="1">
        <text>(6R)-5,10-methylene-5,6,7,8-tetrahydrofolate + glycine + H2O = (6S)-5,6,7,8-tetrahydrofolate + L-serine</text>
        <dbReference type="Rhea" id="RHEA:15481"/>
        <dbReference type="ChEBI" id="CHEBI:15377"/>
        <dbReference type="ChEBI" id="CHEBI:15636"/>
        <dbReference type="ChEBI" id="CHEBI:33384"/>
        <dbReference type="ChEBI" id="CHEBI:57305"/>
        <dbReference type="ChEBI" id="CHEBI:57453"/>
        <dbReference type="EC" id="2.1.2.1"/>
    </reaction>
</comment>
<comment type="cofactor">
    <cofactor evidence="1">
        <name>pyridoxal 5'-phosphate</name>
        <dbReference type="ChEBI" id="CHEBI:597326"/>
    </cofactor>
</comment>
<comment type="pathway">
    <text evidence="1">One-carbon metabolism; tetrahydrofolate interconversion.</text>
</comment>
<comment type="pathway">
    <text evidence="1">Amino-acid biosynthesis; glycine biosynthesis; glycine from L-serine: step 1/1.</text>
</comment>
<comment type="subunit">
    <text evidence="1">Homodimer.</text>
</comment>
<comment type="subcellular location">
    <subcellularLocation>
        <location evidence="1">Cytoplasm</location>
    </subcellularLocation>
</comment>
<comment type="similarity">
    <text evidence="1">Belongs to the SHMT family.</text>
</comment>
<accession>Q82JI0</accession>
<organism>
    <name type="scientific">Streptomyces avermitilis (strain ATCC 31267 / DSM 46492 / JCM 5070 / NBRC 14893 / NCIMB 12804 / NRRL 8165 / MA-4680)</name>
    <dbReference type="NCBI Taxonomy" id="227882"/>
    <lineage>
        <taxon>Bacteria</taxon>
        <taxon>Bacillati</taxon>
        <taxon>Actinomycetota</taxon>
        <taxon>Actinomycetes</taxon>
        <taxon>Kitasatosporales</taxon>
        <taxon>Streptomycetaceae</taxon>
        <taxon>Streptomyces</taxon>
    </lineage>
</organism>
<evidence type="ECO:0000255" key="1">
    <source>
        <dbReference type="HAMAP-Rule" id="MF_00051"/>
    </source>
</evidence>